<name>VL1_HPV64</name>
<reference key="1">
    <citation type="journal article" date="1994" name="J. Infect. Dis.">
        <title>Identification and assessment of known and novel human papillomaviruses by polymerase chain reaction amplification, restriction fragment length polymorphisms, nucleotide sequence, and phylogenetic algorithms.</title>
        <authorList>
            <person name="Bernard H.U."/>
            <person name="Chan S.-Y."/>
            <person name="Manos M.M."/>
            <person name="Ong C.K."/>
            <person name="Villa L.L."/>
            <person name="Delius H."/>
            <person name="Peyton C.L."/>
            <person name="Bauer H.M."/>
            <person name="Wheeler C.M."/>
        </authorList>
    </citation>
    <scope>NUCLEOTIDE SEQUENCE [GENOMIC DNA]</scope>
</reference>
<sequence>AQGHNNGICWHNQLFLTVVYTTRSTNFSVCVGTQSTSTNPPYANTNFKEYLRHAEEYDLEFVFQLCKITLTTDVMTYIHSMSSSILEQWNFGLTPPPSGTLEETYRYVTSQAITCQRPQPPKESEDPYAKMTFWEVDLKEKFSAELDQFPFGR</sequence>
<proteinExistence type="inferred from homology"/>
<organism>
    <name type="scientific">Human papillomavirus type 64</name>
    <dbReference type="NCBI Taxonomy" id="37118"/>
    <lineage>
        <taxon>Viruses</taxon>
        <taxon>Monodnaviria</taxon>
        <taxon>Shotokuvirae</taxon>
        <taxon>Cossaviricota</taxon>
        <taxon>Papovaviricetes</taxon>
        <taxon>Zurhausenvirales</taxon>
        <taxon>Papillomaviridae</taxon>
    </lineage>
</organism>
<feature type="chain" id="PRO_0000133546" description="Major capsid protein L1">
    <location>
        <begin position="1" status="less than"/>
        <end position="153" status="greater than"/>
    </location>
</feature>
<feature type="non-terminal residue">
    <location>
        <position position="1"/>
    </location>
</feature>
<feature type="non-terminal residue">
    <location>
        <position position="153"/>
    </location>
</feature>
<comment type="function">
    <text evidence="1">Forms an icosahedral capsid with a T=7 symmetry and about 55 nm diameter. The capsid is composed of 72 pentamers linked to each other by disulfide bonds and associated with L2 proteins. The capsid encapsulates the genomic DNA, but does not bind DNA. Essential for the initial attachment to the host cell (By similarity).</text>
</comment>
<comment type="subunit">
    <text evidence="1">Self-assembles into homopentamers. The capsid has an icosahedral symmetry and consists of 72 capsomers, with each capsomer being a pentamer of L1. Interacts with the minor capsid protein L2; this interaction is necessary for viral genome encapsidation (By similarity).</text>
</comment>
<comment type="subcellular location">
    <subcellularLocation>
        <location evidence="2">Virion</location>
    </subcellularLocation>
</comment>
<comment type="similarity">
    <text evidence="2">Belongs to the papillomaviridae L1 protein family.</text>
</comment>
<dbReference type="EMBL" id="U12495">
    <property type="protein sequence ID" value="AAA67239.1"/>
    <property type="molecule type" value="Genomic_DNA"/>
</dbReference>
<dbReference type="GO" id="GO:0019028">
    <property type="term" value="C:viral capsid"/>
    <property type="evidence" value="ECO:0007669"/>
    <property type="project" value="UniProtKB-KW"/>
</dbReference>
<dbReference type="GO" id="GO:0005198">
    <property type="term" value="F:structural molecule activity"/>
    <property type="evidence" value="ECO:0007669"/>
    <property type="project" value="InterPro"/>
</dbReference>
<dbReference type="GO" id="GO:0046718">
    <property type="term" value="P:symbiont entry into host cell"/>
    <property type="evidence" value="ECO:0007669"/>
    <property type="project" value="UniProtKB-KW"/>
</dbReference>
<dbReference type="GO" id="GO:0019062">
    <property type="term" value="P:virion attachment to host cell"/>
    <property type="evidence" value="ECO:0007669"/>
    <property type="project" value="UniProtKB-KW"/>
</dbReference>
<dbReference type="Gene3D" id="2.60.175.20">
    <property type="entry name" value="Major capsid L1 (late) superfamily, Papillomavirus"/>
    <property type="match status" value="2"/>
</dbReference>
<dbReference type="InterPro" id="IPR002210">
    <property type="entry name" value="Capsid_L1_Papillomavir"/>
</dbReference>
<dbReference type="InterPro" id="IPR036973">
    <property type="entry name" value="Capsid_L1_sf_Papillomavir"/>
</dbReference>
<dbReference type="InterPro" id="IPR011222">
    <property type="entry name" value="dsDNA_vir_gr_I_capsid"/>
</dbReference>
<dbReference type="Pfam" id="PF00500">
    <property type="entry name" value="Late_protein_L1"/>
    <property type="match status" value="1"/>
</dbReference>
<dbReference type="PRINTS" id="PR00865">
    <property type="entry name" value="HPVCAPSIDL1"/>
</dbReference>
<dbReference type="SUPFAM" id="SSF88648">
    <property type="entry name" value="Group I dsDNA viruses"/>
    <property type="match status" value="1"/>
</dbReference>
<evidence type="ECO:0000250" key="1"/>
<evidence type="ECO:0000305" key="2"/>
<gene>
    <name type="primary">L1</name>
</gene>
<accession>P50824</accession>
<keyword id="KW-0167">Capsid protein</keyword>
<keyword id="KW-0945">Host-virus interaction</keyword>
<keyword id="KW-0426">Late protein</keyword>
<keyword id="KW-1161">Viral attachment to host cell</keyword>
<keyword id="KW-0946">Virion</keyword>
<keyword id="KW-1160">Virus entry into host cell</keyword>
<protein>
    <recommendedName>
        <fullName>Major capsid protein L1</fullName>
    </recommendedName>
</protein>
<organismHost>
    <name type="scientific">Homo sapiens</name>
    <name type="common">Human</name>
    <dbReference type="NCBI Taxonomy" id="9606"/>
</organismHost>